<organism>
    <name type="scientific">Clostridium botulinum (strain Okra / Type B1)</name>
    <dbReference type="NCBI Taxonomy" id="498213"/>
    <lineage>
        <taxon>Bacteria</taxon>
        <taxon>Bacillati</taxon>
        <taxon>Bacillota</taxon>
        <taxon>Clostridia</taxon>
        <taxon>Eubacteriales</taxon>
        <taxon>Clostridiaceae</taxon>
        <taxon>Clostridium</taxon>
    </lineage>
</organism>
<dbReference type="EC" id="2.7.1.39" evidence="1"/>
<dbReference type="EMBL" id="CP000939">
    <property type="protein sequence ID" value="ACA46319.1"/>
    <property type="molecule type" value="Genomic_DNA"/>
</dbReference>
<dbReference type="RefSeq" id="WP_003399717.1">
    <property type="nucleotide sequence ID" value="NC_010516.1"/>
</dbReference>
<dbReference type="SMR" id="B1ILR0"/>
<dbReference type="KEGG" id="cbb:CLD_2916"/>
<dbReference type="HOGENOM" id="CLU_041243_0_2_9"/>
<dbReference type="UniPathway" id="UPA00050">
    <property type="reaction ID" value="UER00064"/>
</dbReference>
<dbReference type="Proteomes" id="UP000008541">
    <property type="component" value="Chromosome"/>
</dbReference>
<dbReference type="GO" id="GO:0005737">
    <property type="term" value="C:cytoplasm"/>
    <property type="evidence" value="ECO:0007669"/>
    <property type="project" value="UniProtKB-SubCell"/>
</dbReference>
<dbReference type="GO" id="GO:0005524">
    <property type="term" value="F:ATP binding"/>
    <property type="evidence" value="ECO:0007669"/>
    <property type="project" value="UniProtKB-UniRule"/>
</dbReference>
<dbReference type="GO" id="GO:0004413">
    <property type="term" value="F:homoserine kinase activity"/>
    <property type="evidence" value="ECO:0007669"/>
    <property type="project" value="UniProtKB-UniRule"/>
</dbReference>
<dbReference type="GO" id="GO:0009088">
    <property type="term" value="P:threonine biosynthetic process"/>
    <property type="evidence" value="ECO:0007669"/>
    <property type="project" value="UniProtKB-UniRule"/>
</dbReference>
<dbReference type="Gene3D" id="3.30.230.10">
    <property type="match status" value="1"/>
</dbReference>
<dbReference type="Gene3D" id="3.30.70.890">
    <property type="entry name" value="GHMP kinase, C-terminal domain"/>
    <property type="match status" value="1"/>
</dbReference>
<dbReference type="HAMAP" id="MF_00384">
    <property type="entry name" value="Homoser_kinase"/>
    <property type="match status" value="1"/>
</dbReference>
<dbReference type="InterPro" id="IPR013750">
    <property type="entry name" value="GHMP_kinase_C_dom"/>
</dbReference>
<dbReference type="InterPro" id="IPR036554">
    <property type="entry name" value="GHMP_kinase_C_sf"/>
</dbReference>
<dbReference type="InterPro" id="IPR006204">
    <property type="entry name" value="GHMP_kinase_N_dom"/>
</dbReference>
<dbReference type="InterPro" id="IPR006203">
    <property type="entry name" value="GHMP_knse_ATP-bd_CS"/>
</dbReference>
<dbReference type="InterPro" id="IPR000870">
    <property type="entry name" value="Homoserine_kinase"/>
</dbReference>
<dbReference type="InterPro" id="IPR020568">
    <property type="entry name" value="Ribosomal_Su5_D2-typ_SF"/>
</dbReference>
<dbReference type="InterPro" id="IPR014721">
    <property type="entry name" value="Ribsml_uS5_D2-typ_fold_subgr"/>
</dbReference>
<dbReference type="NCBIfam" id="NF002288">
    <property type="entry name" value="PRK01212.1-4"/>
    <property type="match status" value="1"/>
</dbReference>
<dbReference type="NCBIfam" id="TIGR00191">
    <property type="entry name" value="thrB"/>
    <property type="match status" value="1"/>
</dbReference>
<dbReference type="PANTHER" id="PTHR20861:SF1">
    <property type="entry name" value="HOMOSERINE KINASE"/>
    <property type="match status" value="1"/>
</dbReference>
<dbReference type="PANTHER" id="PTHR20861">
    <property type="entry name" value="HOMOSERINE/4-DIPHOSPHOCYTIDYL-2-C-METHYL-D-ERYTHRITOL KINASE"/>
    <property type="match status" value="1"/>
</dbReference>
<dbReference type="Pfam" id="PF08544">
    <property type="entry name" value="GHMP_kinases_C"/>
    <property type="match status" value="1"/>
</dbReference>
<dbReference type="Pfam" id="PF00288">
    <property type="entry name" value="GHMP_kinases_N"/>
    <property type="match status" value="1"/>
</dbReference>
<dbReference type="PIRSF" id="PIRSF000676">
    <property type="entry name" value="Homoser_kin"/>
    <property type="match status" value="1"/>
</dbReference>
<dbReference type="PRINTS" id="PR00958">
    <property type="entry name" value="HOMSERKINASE"/>
</dbReference>
<dbReference type="SUPFAM" id="SSF55060">
    <property type="entry name" value="GHMP Kinase, C-terminal domain"/>
    <property type="match status" value="1"/>
</dbReference>
<dbReference type="SUPFAM" id="SSF54211">
    <property type="entry name" value="Ribosomal protein S5 domain 2-like"/>
    <property type="match status" value="1"/>
</dbReference>
<dbReference type="PROSITE" id="PS00627">
    <property type="entry name" value="GHMP_KINASES_ATP"/>
    <property type="match status" value="1"/>
</dbReference>
<gene>
    <name evidence="1" type="primary">thrB</name>
    <name type="ordered locus">CLD_2916</name>
</gene>
<sequence>MVEVRVPATSANIGPGFDCLGVAVNIYNKFFVEEIEDGLIFEGCADKFKNENNLIYVAMKKCFDKIGYKPTGLRIKIESDIPVSRGLGSSAACVVGGIVSANELAGGALNKKELLDLAVEVEGHPDNVNPAFCGGMTASISDNREVIYSKVKVSEGIKFCALIPDFTLSTEKARAVLPKSIDYKDGIFNVGRTALMISALNNGDFHLIKYACKDKLHQDYRAKLIENFYSIKKQCEKLNSLGVFLSGAGPTIMVMLREEDKDFSKNIKSFLETLKNKWEVRELKIDKLGTVVNNRKL</sequence>
<comment type="function">
    <text evidence="1">Catalyzes the ATP-dependent phosphorylation of L-homoserine to L-homoserine phosphate.</text>
</comment>
<comment type="catalytic activity">
    <reaction evidence="1">
        <text>L-homoserine + ATP = O-phospho-L-homoserine + ADP + H(+)</text>
        <dbReference type="Rhea" id="RHEA:13985"/>
        <dbReference type="ChEBI" id="CHEBI:15378"/>
        <dbReference type="ChEBI" id="CHEBI:30616"/>
        <dbReference type="ChEBI" id="CHEBI:57476"/>
        <dbReference type="ChEBI" id="CHEBI:57590"/>
        <dbReference type="ChEBI" id="CHEBI:456216"/>
        <dbReference type="EC" id="2.7.1.39"/>
    </reaction>
</comment>
<comment type="pathway">
    <text evidence="1">Amino-acid biosynthesis; L-threonine biosynthesis; L-threonine from L-aspartate: step 4/5.</text>
</comment>
<comment type="subcellular location">
    <subcellularLocation>
        <location evidence="1">Cytoplasm</location>
    </subcellularLocation>
</comment>
<comment type="similarity">
    <text evidence="1">Belongs to the GHMP kinase family. Homoserine kinase subfamily.</text>
</comment>
<accession>B1ILR0</accession>
<protein>
    <recommendedName>
        <fullName evidence="1">Homoserine kinase</fullName>
        <shortName evidence="1">HK</shortName>
        <shortName evidence="1">HSK</shortName>
        <ecNumber evidence="1">2.7.1.39</ecNumber>
    </recommendedName>
</protein>
<proteinExistence type="inferred from homology"/>
<evidence type="ECO:0000255" key="1">
    <source>
        <dbReference type="HAMAP-Rule" id="MF_00384"/>
    </source>
</evidence>
<reference key="1">
    <citation type="journal article" date="2007" name="PLoS ONE">
        <title>Analysis of the neurotoxin complex genes in Clostridium botulinum A1-A4 and B1 strains: BoNT/A3, /Ba4 and /B1 clusters are located within plasmids.</title>
        <authorList>
            <person name="Smith T.J."/>
            <person name="Hill K.K."/>
            <person name="Foley B.T."/>
            <person name="Detter J.C."/>
            <person name="Munk A.C."/>
            <person name="Bruce D.C."/>
            <person name="Doggett N.A."/>
            <person name="Smith L.A."/>
            <person name="Marks J.D."/>
            <person name="Xie G."/>
            <person name="Brettin T.S."/>
        </authorList>
    </citation>
    <scope>NUCLEOTIDE SEQUENCE [LARGE SCALE GENOMIC DNA]</scope>
    <source>
        <strain>Okra / Type B1</strain>
    </source>
</reference>
<keyword id="KW-0028">Amino-acid biosynthesis</keyword>
<keyword id="KW-0067">ATP-binding</keyword>
<keyword id="KW-0963">Cytoplasm</keyword>
<keyword id="KW-0418">Kinase</keyword>
<keyword id="KW-0547">Nucleotide-binding</keyword>
<keyword id="KW-0791">Threonine biosynthesis</keyword>
<keyword id="KW-0808">Transferase</keyword>
<feature type="chain" id="PRO_1000122412" description="Homoserine kinase">
    <location>
        <begin position="1"/>
        <end position="297"/>
    </location>
</feature>
<feature type="binding site" evidence="1">
    <location>
        <begin position="82"/>
        <end position="92"/>
    </location>
    <ligand>
        <name>ATP</name>
        <dbReference type="ChEBI" id="CHEBI:30616"/>
    </ligand>
</feature>
<name>KHSE_CLOBK</name>